<name>Y3359_MYCA1</name>
<proteinExistence type="inferred from homology"/>
<gene>
    <name type="ordered locus">MAV_3359</name>
</gene>
<reference key="1">
    <citation type="submission" date="2006-10" db="EMBL/GenBank/DDBJ databases">
        <authorList>
            <person name="Fleischmann R.D."/>
            <person name="Dodson R.J."/>
            <person name="Haft D.H."/>
            <person name="Merkel J.S."/>
            <person name="Nelson W.C."/>
            <person name="Fraser C.M."/>
        </authorList>
    </citation>
    <scope>NUCLEOTIDE SEQUENCE [LARGE SCALE GENOMIC DNA]</scope>
    <source>
        <strain>104</strain>
    </source>
</reference>
<organism>
    <name type="scientific">Mycobacterium avium (strain 104)</name>
    <dbReference type="NCBI Taxonomy" id="243243"/>
    <lineage>
        <taxon>Bacteria</taxon>
        <taxon>Bacillati</taxon>
        <taxon>Actinomycetota</taxon>
        <taxon>Actinomycetes</taxon>
        <taxon>Mycobacteriales</taxon>
        <taxon>Mycobacteriaceae</taxon>
        <taxon>Mycobacterium</taxon>
        <taxon>Mycobacterium avium complex (MAC)</taxon>
    </lineage>
</organism>
<keyword id="KW-0067">ATP-binding</keyword>
<keyword id="KW-0342">GTP-binding</keyword>
<keyword id="KW-0547">Nucleotide-binding</keyword>
<protein>
    <recommendedName>
        <fullName evidence="1">Nucleotide-binding protein MAV_3359</fullName>
    </recommendedName>
</protein>
<dbReference type="EMBL" id="CP000479">
    <property type="protein sequence ID" value="ABK68110.1"/>
    <property type="molecule type" value="Genomic_DNA"/>
</dbReference>
<dbReference type="SMR" id="A0QI03"/>
<dbReference type="KEGG" id="mav:MAV_3359"/>
<dbReference type="HOGENOM" id="CLU_059558_0_0_11"/>
<dbReference type="Proteomes" id="UP000001574">
    <property type="component" value="Chromosome"/>
</dbReference>
<dbReference type="GO" id="GO:0005524">
    <property type="term" value="F:ATP binding"/>
    <property type="evidence" value="ECO:0007669"/>
    <property type="project" value="UniProtKB-UniRule"/>
</dbReference>
<dbReference type="GO" id="GO:0005525">
    <property type="term" value="F:GTP binding"/>
    <property type="evidence" value="ECO:0007669"/>
    <property type="project" value="UniProtKB-UniRule"/>
</dbReference>
<dbReference type="HAMAP" id="MF_00636">
    <property type="entry name" value="RapZ_like"/>
    <property type="match status" value="1"/>
</dbReference>
<dbReference type="InterPro" id="IPR027417">
    <property type="entry name" value="P-loop_NTPase"/>
</dbReference>
<dbReference type="InterPro" id="IPR005337">
    <property type="entry name" value="RapZ-like"/>
</dbReference>
<dbReference type="InterPro" id="IPR053930">
    <property type="entry name" value="RapZ-like_N"/>
</dbReference>
<dbReference type="InterPro" id="IPR053931">
    <property type="entry name" value="RapZ_C"/>
</dbReference>
<dbReference type="NCBIfam" id="NF003828">
    <property type="entry name" value="PRK05416.1"/>
    <property type="match status" value="1"/>
</dbReference>
<dbReference type="PANTHER" id="PTHR30448">
    <property type="entry name" value="RNASE ADAPTER PROTEIN RAPZ"/>
    <property type="match status" value="1"/>
</dbReference>
<dbReference type="PANTHER" id="PTHR30448:SF0">
    <property type="entry name" value="RNASE ADAPTER PROTEIN RAPZ"/>
    <property type="match status" value="1"/>
</dbReference>
<dbReference type="Pfam" id="PF22740">
    <property type="entry name" value="PapZ_C"/>
    <property type="match status" value="1"/>
</dbReference>
<dbReference type="Pfam" id="PF03668">
    <property type="entry name" value="RapZ-like_N"/>
    <property type="match status" value="1"/>
</dbReference>
<dbReference type="PIRSF" id="PIRSF005052">
    <property type="entry name" value="P-loopkin"/>
    <property type="match status" value="1"/>
</dbReference>
<dbReference type="SUPFAM" id="SSF52540">
    <property type="entry name" value="P-loop containing nucleoside triphosphate hydrolases"/>
    <property type="match status" value="1"/>
</dbReference>
<feature type="chain" id="PRO_0000383265" description="Nucleotide-binding protein MAV_3359">
    <location>
        <begin position="1"/>
        <end position="298"/>
    </location>
</feature>
<feature type="binding site" evidence="1">
    <location>
        <begin position="18"/>
        <end position="25"/>
    </location>
    <ligand>
        <name>ATP</name>
        <dbReference type="ChEBI" id="CHEBI:30616"/>
    </ligand>
</feature>
<feature type="binding site" evidence="1">
    <location>
        <begin position="69"/>
        <end position="72"/>
    </location>
    <ligand>
        <name>GTP</name>
        <dbReference type="ChEBI" id="CHEBI:37565"/>
    </ligand>
</feature>
<evidence type="ECO:0000255" key="1">
    <source>
        <dbReference type="HAMAP-Rule" id="MF_00636"/>
    </source>
</evidence>
<comment type="function">
    <text evidence="1">Displays ATPase and GTPase activities.</text>
</comment>
<comment type="similarity">
    <text evidence="1">Belongs to the RapZ-like family.</text>
</comment>
<accession>A0QI03</accession>
<sequence>MDAHLENGAGIDVVLVTGLSGAGRGTAAKVLEDLGWYVADNLPPQLITRMVDLGMDAGSRITQLAVVMDVRSRGFTGDLDSVRTELATRNIAPRVVFMEASDDMLVRRYEQNRRSHPLQGDQTLAEGIAAERRMLAPVRATADLIIDTSTLSVRALRETIERAFGGGASATISVTVESFGFKYGLPMDADMVMDVRFLPNPHWVDELRPRTGQDPAVRDYVLGQPGAAEFLDAYHRLLSLVVDGYRREGKRYMTIAIGCTGGKHRSVAIAEALMQRLQAQHGEAQLSVRVLHRDLGRE</sequence>